<organism>
    <name type="scientific">Salmonella typhi</name>
    <dbReference type="NCBI Taxonomy" id="90370"/>
    <lineage>
        <taxon>Bacteria</taxon>
        <taxon>Pseudomonadati</taxon>
        <taxon>Pseudomonadota</taxon>
        <taxon>Gammaproteobacteria</taxon>
        <taxon>Enterobacterales</taxon>
        <taxon>Enterobacteriaceae</taxon>
        <taxon>Salmonella</taxon>
    </lineage>
</organism>
<dbReference type="EC" id="3.5.2.5" evidence="1"/>
<dbReference type="EMBL" id="AL513382">
    <property type="protein sequence ID" value="CAD05007.1"/>
    <property type="molecule type" value="Genomic_DNA"/>
</dbReference>
<dbReference type="EMBL" id="AE014613">
    <property type="protein sequence ID" value="AAO69932.1"/>
    <property type="molecule type" value="Genomic_DNA"/>
</dbReference>
<dbReference type="RefSeq" id="NP_455115.1">
    <property type="nucleotide sequence ID" value="NC_003198.1"/>
</dbReference>
<dbReference type="RefSeq" id="WP_000006865.1">
    <property type="nucleotide sequence ID" value="NZ_WSUR01000008.1"/>
</dbReference>
<dbReference type="SMR" id="Q8XGS6"/>
<dbReference type="STRING" id="220341.gene:17584587"/>
<dbReference type="KEGG" id="stt:t2338"/>
<dbReference type="KEGG" id="sty:STY0571"/>
<dbReference type="PATRIC" id="fig|220341.7.peg.573"/>
<dbReference type="eggNOG" id="COG0044">
    <property type="taxonomic scope" value="Bacteria"/>
</dbReference>
<dbReference type="HOGENOM" id="CLU_015572_4_2_6"/>
<dbReference type="OMA" id="HFNEPGR"/>
<dbReference type="OrthoDB" id="5687299at2"/>
<dbReference type="UniPathway" id="UPA00395">
    <property type="reaction ID" value="UER00653"/>
</dbReference>
<dbReference type="Proteomes" id="UP000000541">
    <property type="component" value="Chromosome"/>
</dbReference>
<dbReference type="Proteomes" id="UP000002670">
    <property type="component" value="Chromosome"/>
</dbReference>
<dbReference type="GO" id="GO:0005737">
    <property type="term" value="C:cytoplasm"/>
    <property type="evidence" value="ECO:0007669"/>
    <property type="project" value="TreeGrafter"/>
</dbReference>
<dbReference type="GO" id="GO:0004038">
    <property type="term" value="F:allantoinase activity"/>
    <property type="evidence" value="ECO:0007669"/>
    <property type="project" value="UniProtKB-UniRule"/>
</dbReference>
<dbReference type="GO" id="GO:0050897">
    <property type="term" value="F:cobalt ion binding"/>
    <property type="evidence" value="ECO:0007669"/>
    <property type="project" value="InterPro"/>
</dbReference>
<dbReference type="GO" id="GO:0008270">
    <property type="term" value="F:zinc ion binding"/>
    <property type="evidence" value="ECO:0007669"/>
    <property type="project" value="InterPro"/>
</dbReference>
<dbReference type="GO" id="GO:0000256">
    <property type="term" value="P:allantoin catabolic process"/>
    <property type="evidence" value="ECO:0007669"/>
    <property type="project" value="UniProtKB-UniRule"/>
</dbReference>
<dbReference type="GO" id="GO:0006145">
    <property type="term" value="P:purine nucleobase catabolic process"/>
    <property type="evidence" value="ECO:0007669"/>
    <property type="project" value="TreeGrafter"/>
</dbReference>
<dbReference type="CDD" id="cd01315">
    <property type="entry name" value="L-HYD_ALN"/>
    <property type="match status" value="1"/>
</dbReference>
<dbReference type="FunFam" id="3.20.20.140:FF:000013">
    <property type="entry name" value="Allantoinase"/>
    <property type="match status" value="1"/>
</dbReference>
<dbReference type="Gene3D" id="3.20.20.140">
    <property type="entry name" value="Metal-dependent hydrolases"/>
    <property type="match status" value="1"/>
</dbReference>
<dbReference type="HAMAP" id="MF_01645">
    <property type="entry name" value="Hydantoinase"/>
    <property type="match status" value="1"/>
</dbReference>
<dbReference type="InterPro" id="IPR017593">
    <property type="entry name" value="Allantoinase"/>
</dbReference>
<dbReference type="InterPro" id="IPR047604">
    <property type="entry name" value="Allantoinase_bact"/>
</dbReference>
<dbReference type="InterPro" id="IPR006680">
    <property type="entry name" value="Amidohydro-rel"/>
</dbReference>
<dbReference type="InterPro" id="IPR050138">
    <property type="entry name" value="DHOase/Allantoinase_Hydrolase"/>
</dbReference>
<dbReference type="InterPro" id="IPR011059">
    <property type="entry name" value="Metal-dep_hydrolase_composite"/>
</dbReference>
<dbReference type="InterPro" id="IPR032466">
    <property type="entry name" value="Metal_Hydrolase"/>
</dbReference>
<dbReference type="NCBIfam" id="TIGR03178">
    <property type="entry name" value="allantoinase"/>
    <property type="match status" value="1"/>
</dbReference>
<dbReference type="NCBIfam" id="NF005960">
    <property type="entry name" value="PRK08044.1"/>
    <property type="match status" value="1"/>
</dbReference>
<dbReference type="PANTHER" id="PTHR43668">
    <property type="entry name" value="ALLANTOINASE"/>
    <property type="match status" value="1"/>
</dbReference>
<dbReference type="PANTHER" id="PTHR43668:SF4">
    <property type="entry name" value="ALLANTOINASE"/>
    <property type="match status" value="1"/>
</dbReference>
<dbReference type="Pfam" id="PF01979">
    <property type="entry name" value="Amidohydro_1"/>
    <property type="match status" value="1"/>
</dbReference>
<dbReference type="SUPFAM" id="SSF51338">
    <property type="entry name" value="Composite domain of metallo-dependent hydrolases"/>
    <property type="match status" value="1"/>
</dbReference>
<dbReference type="SUPFAM" id="SSF51556">
    <property type="entry name" value="Metallo-dependent hydrolases"/>
    <property type="match status" value="1"/>
</dbReference>
<reference key="1">
    <citation type="journal article" date="2001" name="Nature">
        <title>Complete genome sequence of a multiple drug resistant Salmonella enterica serovar Typhi CT18.</title>
        <authorList>
            <person name="Parkhill J."/>
            <person name="Dougan G."/>
            <person name="James K.D."/>
            <person name="Thomson N.R."/>
            <person name="Pickard D."/>
            <person name="Wain J."/>
            <person name="Churcher C.M."/>
            <person name="Mungall K.L."/>
            <person name="Bentley S.D."/>
            <person name="Holden M.T.G."/>
            <person name="Sebaihia M."/>
            <person name="Baker S."/>
            <person name="Basham D."/>
            <person name="Brooks K."/>
            <person name="Chillingworth T."/>
            <person name="Connerton P."/>
            <person name="Cronin A."/>
            <person name="Davis P."/>
            <person name="Davies R.M."/>
            <person name="Dowd L."/>
            <person name="White N."/>
            <person name="Farrar J."/>
            <person name="Feltwell T."/>
            <person name="Hamlin N."/>
            <person name="Haque A."/>
            <person name="Hien T.T."/>
            <person name="Holroyd S."/>
            <person name="Jagels K."/>
            <person name="Krogh A."/>
            <person name="Larsen T.S."/>
            <person name="Leather S."/>
            <person name="Moule S."/>
            <person name="O'Gaora P."/>
            <person name="Parry C."/>
            <person name="Quail M.A."/>
            <person name="Rutherford K.M."/>
            <person name="Simmonds M."/>
            <person name="Skelton J."/>
            <person name="Stevens K."/>
            <person name="Whitehead S."/>
            <person name="Barrell B.G."/>
        </authorList>
    </citation>
    <scope>NUCLEOTIDE SEQUENCE [LARGE SCALE GENOMIC DNA]</scope>
    <source>
        <strain>CT18</strain>
    </source>
</reference>
<reference key="2">
    <citation type="journal article" date="2003" name="J. Bacteriol.">
        <title>Comparative genomics of Salmonella enterica serovar Typhi strains Ty2 and CT18.</title>
        <authorList>
            <person name="Deng W."/>
            <person name="Liou S.-R."/>
            <person name="Plunkett G. III"/>
            <person name="Mayhew G.F."/>
            <person name="Rose D.J."/>
            <person name="Burland V."/>
            <person name="Kodoyianni V."/>
            <person name="Schwartz D.C."/>
            <person name="Blattner F.R."/>
        </authorList>
    </citation>
    <scope>NUCLEOTIDE SEQUENCE [LARGE SCALE GENOMIC DNA]</scope>
    <source>
        <strain>ATCC 700931 / Ty2</strain>
    </source>
</reference>
<protein>
    <recommendedName>
        <fullName evidence="1">Allantoinase</fullName>
        <ecNumber evidence="1">3.5.2.5</ecNumber>
    </recommendedName>
    <alternativeName>
        <fullName evidence="1">Allantoin-utilizing enzyme</fullName>
    </alternativeName>
</protein>
<gene>
    <name evidence="1" type="primary">allB</name>
    <name type="ordered locus">STY0571</name>
    <name type="ordered locus">t2338</name>
</gene>
<name>ALLB_SALTI</name>
<feature type="chain" id="PRO_0000317684" description="Allantoinase">
    <location>
        <begin position="1"/>
        <end position="453"/>
    </location>
</feature>
<feature type="binding site" evidence="1">
    <location>
        <position position="59"/>
    </location>
    <ligand>
        <name>Zn(2+)</name>
        <dbReference type="ChEBI" id="CHEBI:29105"/>
        <label>1</label>
    </ligand>
</feature>
<feature type="binding site" evidence="1">
    <location>
        <position position="61"/>
    </location>
    <ligand>
        <name>Zn(2+)</name>
        <dbReference type="ChEBI" id="CHEBI:29105"/>
        <label>1</label>
    </ligand>
</feature>
<feature type="binding site" description="via carbamate group" evidence="1">
    <location>
        <position position="146"/>
    </location>
    <ligand>
        <name>Zn(2+)</name>
        <dbReference type="ChEBI" id="CHEBI:29105"/>
        <label>1</label>
    </ligand>
</feature>
<feature type="binding site" description="via carbamate group" evidence="1">
    <location>
        <position position="146"/>
    </location>
    <ligand>
        <name>Zn(2+)</name>
        <dbReference type="ChEBI" id="CHEBI:29105"/>
        <label>2</label>
    </ligand>
</feature>
<feature type="binding site" evidence="1">
    <location>
        <position position="186"/>
    </location>
    <ligand>
        <name>Zn(2+)</name>
        <dbReference type="ChEBI" id="CHEBI:29105"/>
        <label>2</label>
    </ligand>
</feature>
<feature type="binding site" evidence="1">
    <location>
        <position position="242"/>
    </location>
    <ligand>
        <name>Zn(2+)</name>
        <dbReference type="ChEBI" id="CHEBI:29105"/>
        <label>2</label>
    </ligand>
</feature>
<feature type="binding site" evidence="1">
    <location>
        <position position="315"/>
    </location>
    <ligand>
        <name>Zn(2+)</name>
        <dbReference type="ChEBI" id="CHEBI:29105"/>
        <label>1</label>
    </ligand>
</feature>
<feature type="modified residue" description="N6-carboxylysine" evidence="1">
    <location>
        <position position="146"/>
    </location>
</feature>
<evidence type="ECO:0000255" key="1">
    <source>
        <dbReference type="HAMAP-Rule" id="MF_01645"/>
    </source>
</evidence>
<comment type="function">
    <text evidence="1">Catalyzes the conversion of allantoin (5-ureidohydantoin) to allantoic acid by hydrolytic cleavage of the five-member hydantoin ring.</text>
</comment>
<comment type="catalytic activity">
    <reaction evidence="1">
        <text>(S)-allantoin + H2O = allantoate + H(+)</text>
        <dbReference type="Rhea" id="RHEA:17029"/>
        <dbReference type="ChEBI" id="CHEBI:15377"/>
        <dbReference type="ChEBI" id="CHEBI:15378"/>
        <dbReference type="ChEBI" id="CHEBI:15678"/>
        <dbReference type="ChEBI" id="CHEBI:17536"/>
        <dbReference type="EC" id="3.5.2.5"/>
    </reaction>
</comment>
<comment type="cofactor">
    <cofactor evidence="1">
        <name>Zn(2+)</name>
        <dbReference type="ChEBI" id="CHEBI:29105"/>
    </cofactor>
    <text evidence="1">Binds 2 Zn(2+) ions per subunit.</text>
</comment>
<comment type="pathway">
    <text evidence="1">Nitrogen metabolism; (S)-allantoin degradation; allantoate from (S)-allantoin: step 1/1.</text>
</comment>
<comment type="subunit">
    <text evidence="1">Homotetramer.</text>
</comment>
<comment type="PTM">
    <text evidence="1">Carboxylation allows a single lysine to coordinate two zinc ions.</text>
</comment>
<comment type="similarity">
    <text evidence="1">Belongs to the metallo-dependent hydrolases superfamily. Allantoinase family.</text>
</comment>
<accession>Q8XGS6</accession>
<accession>Q7ANE4</accession>
<keyword id="KW-0378">Hydrolase</keyword>
<keyword id="KW-0479">Metal-binding</keyword>
<keyword id="KW-0659">Purine metabolism</keyword>
<keyword id="KW-0862">Zinc</keyword>
<proteinExistence type="inferred from homology"/>
<sequence>MSFDLIIKNGTVILENEARVIDIAVQGGKIAAIGENLGEAKNVLDATGLIVSPGMVDAHTHISEPGRTHWEGYETGTRAAAKGGITTMIEMPLNQLPATVDRETIELKFDAAKGKLTIDAAQLGGLVSYNLDRLHELDEVGVVGFKCFVATCGDRGIDNDFRDVNDWQFYKGAQKLGEMDQTVLVHCENALICDELGEEAKREGRVTAHDYVASRPVFTEVEAIRRVLYLAKAAGCRLHVCHISSPEGVEEVTRARQEGQDVTCESCPHYFVLDTDQFEEIGTLAKCSPPIRDQENQKGMWEKLFNGEIDCLVSDHSPCPPEMKAGNIMQAWGGIAGLQNCMDVMFDEAVQKRGMSLPMFGKLMATNAADIFGLKHKGRIAPGKDADLVFIQPDSSYVLKNEDLEYRHKVSPYVGRTIGARITKTILRGDVIYDIEHGFPVPPKGQFILKHQQ</sequence>